<protein>
    <recommendedName>
        <fullName evidence="1">Endoribonuclease YbeY</fullName>
        <ecNumber evidence="1">3.1.-.-</ecNumber>
    </recommendedName>
</protein>
<keyword id="KW-0963">Cytoplasm</keyword>
<keyword id="KW-0255">Endonuclease</keyword>
<keyword id="KW-0378">Hydrolase</keyword>
<keyword id="KW-0479">Metal-binding</keyword>
<keyword id="KW-0540">Nuclease</keyword>
<keyword id="KW-1185">Reference proteome</keyword>
<keyword id="KW-0690">Ribosome biogenesis</keyword>
<keyword id="KW-0698">rRNA processing</keyword>
<keyword id="KW-0862">Zinc</keyword>
<evidence type="ECO:0000255" key="1">
    <source>
        <dbReference type="HAMAP-Rule" id="MF_00009"/>
    </source>
</evidence>
<sequence>MQQNKLSLSVQYADTRVQDILTRPLLRKWVKAALLAPAQITLRFVDAAEGQILNRNYRGKDYATNVLTFTYNDDDGSDIADDAVTQADIILCTDVLQREAAEQNKTLIFHAAHLVIHGVLHAQGYDHESDEEAEEMEALEIEFLAALGFPNPYIEA</sequence>
<feature type="chain" id="PRO_1000000725" description="Endoribonuclease YbeY">
    <location>
        <begin position="1"/>
        <end position="156"/>
    </location>
</feature>
<feature type="binding site" evidence="1">
    <location>
        <position position="117"/>
    </location>
    <ligand>
        <name>Zn(2+)</name>
        <dbReference type="ChEBI" id="CHEBI:29105"/>
        <note>catalytic</note>
    </ligand>
</feature>
<feature type="binding site" evidence="1">
    <location>
        <position position="121"/>
    </location>
    <ligand>
        <name>Zn(2+)</name>
        <dbReference type="ChEBI" id="CHEBI:29105"/>
        <note>catalytic</note>
    </ligand>
</feature>
<feature type="binding site" evidence="1">
    <location>
        <position position="127"/>
    </location>
    <ligand>
        <name>Zn(2+)</name>
        <dbReference type="ChEBI" id="CHEBI:29105"/>
        <note>catalytic</note>
    </ligand>
</feature>
<dbReference type="EC" id="3.1.-.-" evidence="1"/>
<dbReference type="EMBL" id="CU207211">
    <property type="protein sequence ID" value="CAL60602.1"/>
    <property type="molecule type" value="Genomic_DNA"/>
</dbReference>
<dbReference type="SMR" id="A4G265"/>
<dbReference type="STRING" id="204773.HEAR0379"/>
<dbReference type="KEGG" id="har:HEAR0379"/>
<dbReference type="eggNOG" id="COG0319">
    <property type="taxonomic scope" value="Bacteria"/>
</dbReference>
<dbReference type="HOGENOM" id="CLU_106710_0_1_4"/>
<dbReference type="OrthoDB" id="9807740at2"/>
<dbReference type="Proteomes" id="UP000006697">
    <property type="component" value="Chromosome"/>
</dbReference>
<dbReference type="GO" id="GO:0005737">
    <property type="term" value="C:cytoplasm"/>
    <property type="evidence" value="ECO:0007669"/>
    <property type="project" value="UniProtKB-SubCell"/>
</dbReference>
<dbReference type="GO" id="GO:0004222">
    <property type="term" value="F:metalloendopeptidase activity"/>
    <property type="evidence" value="ECO:0007669"/>
    <property type="project" value="InterPro"/>
</dbReference>
<dbReference type="GO" id="GO:0004521">
    <property type="term" value="F:RNA endonuclease activity"/>
    <property type="evidence" value="ECO:0007669"/>
    <property type="project" value="UniProtKB-UniRule"/>
</dbReference>
<dbReference type="GO" id="GO:0008270">
    <property type="term" value="F:zinc ion binding"/>
    <property type="evidence" value="ECO:0007669"/>
    <property type="project" value="UniProtKB-UniRule"/>
</dbReference>
<dbReference type="GO" id="GO:0006364">
    <property type="term" value="P:rRNA processing"/>
    <property type="evidence" value="ECO:0007669"/>
    <property type="project" value="UniProtKB-UniRule"/>
</dbReference>
<dbReference type="Gene3D" id="3.40.390.30">
    <property type="entry name" value="Metalloproteases ('zincins'), catalytic domain"/>
    <property type="match status" value="1"/>
</dbReference>
<dbReference type="HAMAP" id="MF_00009">
    <property type="entry name" value="Endoribonucl_YbeY"/>
    <property type="match status" value="1"/>
</dbReference>
<dbReference type="InterPro" id="IPR023091">
    <property type="entry name" value="MetalPrtase_cat_dom_sf_prd"/>
</dbReference>
<dbReference type="InterPro" id="IPR002036">
    <property type="entry name" value="YbeY"/>
</dbReference>
<dbReference type="InterPro" id="IPR020549">
    <property type="entry name" value="YbeY_CS"/>
</dbReference>
<dbReference type="NCBIfam" id="TIGR00043">
    <property type="entry name" value="rRNA maturation RNase YbeY"/>
    <property type="match status" value="1"/>
</dbReference>
<dbReference type="PANTHER" id="PTHR46986">
    <property type="entry name" value="ENDORIBONUCLEASE YBEY, CHLOROPLASTIC"/>
    <property type="match status" value="1"/>
</dbReference>
<dbReference type="PANTHER" id="PTHR46986:SF1">
    <property type="entry name" value="ENDORIBONUCLEASE YBEY, CHLOROPLASTIC"/>
    <property type="match status" value="1"/>
</dbReference>
<dbReference type="Pfam" id="PF02130">
    <property type="entry name" value="YbeY"/>
    <property type="match status" value="1"/>
</dbReference>
<dbReference type="SUPFAM" id="SSF55486">
    <property type="entry name" value="Metalloproteases ('zincins'), catalytic domain"/>
    <property type="match status" value="1"/>
</dbReference>
<dbReference type="PROSITE" id="PS01306">
    <property type="entry name" value="UPF0054"/>
    <property type="match status" value="1"/>
</dbReference>
<name>YBEY_HERAR</name>
<gene>
    <name evidence="1" type="primary">ybeY</name>
    <name type="ordered locus">HEAR0379</name>
</gene>
<accession>A4G265</accession>
<organism>
    <name type="scientific">Herminiimonas arsenicoxydans</name>
    <dbReference type="NCBI Taxonomy" id="204773"/>
    <lineage>
        <taxon>Bacteria</taxon>
        <taxon>Pseudomonadati</taxon>
        <taxon>Pseudomonadota</taxon>
        <taxon>Betaproteobacteria</taxon>
        <taxon>Burkholderiales</taxon>
        <taxon>Oxalobacteraceae</taxon>
        <taxon>Herminiimonas</taxon>
    </lineage>
</organism>
<comment type="function">
    <text evidence="1">Single strand-specific metallo-endoribonuclease involved in late-stage 70S ribosome quality control and in maturation of the 3' terminus of the 16S rRNA.</text>
</comment>
<comment type="cofactor">
    <cofactor evidence="1">
        <name>Zn(2+)</name>
        <dbReference type="ChEBI" id="CHEBI:29105"/>
    </cofactor>
    <text evidence="1">Binds 1 zinc ion.</text>
</comment>
<comment type="subcellular location">
    <subcellularLocation>
        <location evidence="1">Cytoplasm</location>
    </subcellularLocation>
</comment>
<comment type="similarity">
    <text evidence="1">Belongs to the endoribonuclease YbeY family.</text>
</comment>
<reference key="1">
    <citation type="journal article" date="2007" name="PLoS Genet.">
        <title>A tale of two oxidation states: bacterial colonization of arsenic-rich environments.</title>
        <authorList>
            <person name="Muller D."/>
            <person name="Medigue C."/>
            <person name="Koechler S."/>
            <person name="Barbe V."/>
            <person name="Barakat M."/>
            <person name="Talla E."/>
            <person name="Bonnefoy V."/>
            <person name="Krin E."/>
            <person name="Arsene-Ploetze F."/>
            <person name="Carapito C."/>
            <person name="Chandler M."/>
            <person name="Cournoyer B."/>
            <person name="Cruveiller S."/>
            <person name="Dossat C."/>
            <person name="Duval S."/>
            <person name="Heymann M."/>
            <person name="Leize E."/>
            <person name="Lieutaud A."/>
            <person name="Lievremont D."/>
            <person name="Makita Y."/>
            <person name="Mangenot S."/>
            <person name="Nitschke W."/>
            <person name="Ortet P."/>
            <person name="Perdrial N."/>
            <person name="Schoepp B."/>
            <person name="Siguier P."/>
            <person name="Simeonova D.D."/>
            <person name="Rouy Z."/>
            <person name="Segurens B."/>
            <person name="Turlin E."/>
            <person name="Vallenet D."/>
            <person name="van Dorsselaer A."/>
            <person name="Weiss S."/>
            <person name="Weissenbach J."/>
            <person name="Lett M.-C."/>
            <person name="Danchin A."/>
            <person name="Bertin P.N."/>
        </authorList>
    </citation>
    <scope>NUCLEOTIDE SEQUENCE [LARGE SCALE GENOMIC DNA]</scope>
    <source>
        <strain>ULPAs1</strain>
    </source>
</reference>
<proteinExistence type="inferred from homology"/>